<accession>P85553</accession>
<sequence>GSSGMIPFPRV</sequence>
<proteinExistence type="evidence at protein level"/>
<reference evidence="4" key="1">
    <citation type="journal article" date="2009" name="BMC Evol. Biol.">
        <title>A proteomic approach for studying insect phylogeny: CAPA peptides of ancient insect taxa (Dictyoptera, Blattoptera) as a test case.</title>
        <authorList>
            <person name="Roth S."/>
            <person name="Fromm B."/>
            <person name="Gaede G."/>
            <person name="Predel R."/>
        </authorList>
    </citation>
    <scope>PROTEIN SEQUENCE</scope>
    <scope>AMIDATION AT VAL-11</scope>
    <source>
        <tissue evidence="2">Abdominal perisympathetic organs</tissue>
    </source>
</reference>
<comment type="function">
    <text evidence="4">Mediates visceral muscle contractile activity (myotropic activity).</text>
</comment>
<comment type="subcellular location">
    <subcellularLocation>
        <location evidence="4">Secreted</location>
    </subcellularLocation>
</comment>
<comment type="similarity">
    <text evidence="1">Belongs to the periviscerokinin family.</text>
</comment>
<feature type="peptide" id="PRO_0000378819" description="Periviscerokinin-3" evidence="2">
    <location>
        <begin position="1"/>
        <end position="11"/>
    </location>
</feature>
<feature type="modified residue" description="Valine amide" evidence="2">
    <location>
        <position position="11"/>
    </location>
</feature>
<protein>
    <recommendedName>
        <fullName evidence="3">Periviscerokinin-3</fullName>
        <shortName evidence="3">BlaGe-PVK-3</shortName>
    </recommendedName>
</protein>
<name>PVK3_BLAGE</name>
<evidence type="ECO:0000255" key="1"/>
<evidence type="ECO:0000269" key="2">
    <source>
    </source>
</evidence>
<evidence type="ECO:0000303" key="3">
    <source>
    </source>
</evidence>
<evidence type="ECO:0000305" key="4"/>
<keyword id="KW-0027">Amidation</keyword>
<keyword id="KW-0903">Direct protein sequencing</keyword>
<keyword id="KW-0527">Neuropeptide</keyword>
<keyword id="KW-0964">Secreted</keyword>
<organism>
    <name type="scientific">Blattella germanica</name>
    <name type="common">German cockroach</name>
    <name type="synonym">Blatta germanica</name>
    <dbReference type="NCBI Taxonomy" id="6973"/>
    <lineage>
        <taxon>Eukaryota</taxon>
        <taxon>Metazoa</taxon>
        <taxon>Ecdysozoa</taxon>
        <taxon>Arthropoda</taxon>
        <taxon>Hexapoda</taxon>
        <taxon>Insecta</taxon>
        <taxon>Pterygota</taxon>
        <taxon>Neoptera</taxon>
        <taxon>Polyneoptera</taxon>
        <taxon>Dictyoptera</taxon>
        <taxon>Blattodea</taxon>
        <taxon>Blaberoidea</taxon>
        <taxon>Blattellidae</taxon>
        <taxon>Blattella</taxon>
    </lineage>
</organism>
<dbReference type="GO" id="GO:0005576">
    <property type="term" value="C:extracellular region"/>
    <property type="evidence" value="ECO:0007669"/>
    <property type="project" value="UniProtKB-SubCell"/>
</dbReference>
<dbReference type="GO" id="GO:0007218">
    <property type="term" value="P:neuropeptide signaling pathway"/>
    <property type="evidence" value="ECO:0007669"/>
    <property type="project" value="UniProtKB-KW"/>
</dbReference>
<dbReference type="InterPro" id="IPR013231">
    <property type="entry name" value="Periviscerokinin"/>
</dbReference>
<dbReference type="Pfam" id="PF08259">
    <property type="entry name" value="Periviscerokin"/>
    <property type="match status" value="1"/>
</dbReference>